<name>HFQ_CLOBH</name>
<dbReference type="EMBL" id="CP000727">
    <property type="protein sequence ID" value="ABS36014.1"/>
    <property type="molecule type" value="Genomic_DNA"/>
</dbReference>
<dbReference type="EMBL" id="AM412317">
    <property type="protein sequence ID" value="CAL83336.1"/>
    <property type="molecule type" value="Genomic_DNA"/>
</dbReference>
<dbReference type="RefSeq" id="WP_003358923.1">
    <property type="nucleotide sequence ID" value="NC_009698.1"/>
</dbReference>
<dbReference type="RefSeq" id="YP_001254297.1">
    <property type="nucleotide sequence ID" value="NC_009495.1"/>
</dbReference>
<dbReference type="RefSeq" id="YP_001387595.1">
    <property type="nucleotide sequence ID" value="NC_009698.1"/>
</dbReference>
<dbReference type="SMR" id="A5I2R9"/>
<dbReference type="GeneID" id="92938492"/>
<dbReference type="KEGG" id="cbh:CLC_1739"/>
<dbReference type="KEGG" id="cbo:CBO1797"/>
<dbReference type="PATRIC" id="fig|413999.7.peg.1768"/>
<dbReference type="HOGENOM" id="CLU_113688_0_2_9"/>
<dbReference type="PRO" id="PR:A5I2R9"/>
<dbReference type="Proteomes" id="UP000001986">
    <property type="component" value="Chromosome"/>
</dbReference>
<dbReference type="GO" id="GO:0005829">
    <property type="term" value="C:cytosol"/>
    <property type="evidence" value="ECO:0000318"/>
    <property type="project" value="GO_Central"/>
</dbReference>
<dbReference type="GO" id="GO:0003723">
    <property type="term" value="F:RNA binding"/>
    <property type="evidence" value="ECO:0000318"/>
    <property type="project" value="GO_Central"/>
</dbReference>
<dbReference type="GO" id="GO:0006355">
    <property type="term" value="P:regulation of DNA-templated transcription"/>
    <property type="evidence" value="ECO:0007669"/>
    <property type="project" value="InterPro"/>
</dbReference>
<dbReference type="GO" id="GO:0043487">
    <property type="term" value="P:regulation of RNA stability"/>
    <property type="evidence" value="ECO:0000318"/>
    <property type="project" value="GO_Central"/>
</dbReference>
<dbReference type="GO" id="GO:0045974">
    <property type="term" value="P:regulation of translation, ncRNA-mediated"/>
    <property type="evidence" value="ECO:0000318"/>
    <property type="project" value="GO_Central"/>
</dbReference>
<dbReference type="CDD" id="cd01716">
    <property type="entry name" value="Hfq"/>
    <property type="match status" value="1"/>
</dbReference>
<dbReference type="FunFam" id="2.30.30.100:FF:000012">
    <property type="entry name" value="RNA-binding protein Hfq"/>
    <property type="match status" value="1"/>
</dbReference>
<dbReference type="Gene3D" id="2.30.30.100">
    <property type="match status" value="1"/>
</dbReference>
<dbReference type="HAMAP" id="MF_00436">
    <property type="entry name" value="Hfq"/>
    <property type="match status" value="1"/>
</dbReference>
<dbReference type="InterPro" id="IPR005001">
    <property type="entry name" value="Hfq"/>
</dbReference>
<dbReference type="InterPro" id="IPR010920">
    <property type="entry name" value="LSM_dom_sf"/>
</dbReference>
<dbReference type="InterPro" id="IPR047575">
    <property type="entry name" value="Sm"/>
</dbReference>
<dbReference type="NCBIfam" id="TIGR02383">
    <property type="entry name" value="Hfq"/>
    <property type="match status" value="1"/>
</dbReference>
<dbReference type="NCBIfam" id="NF001602">
    <property type="entry name" value="PRK00395.1"/>
    <property type="match status" value="1"/>
</dbReference>
<dbReference type="PANTHER" id="PTHR34772">
    <property type="entry name" value="RNA-BINDING PROTEIN HFQ"/>
    <property type="match status" value="1"/>
</dbReference>
<dbReference type="PANTHER" id="PTHR34772:SF1">
    <property type="entry name" value="RNA-BINDING PROTEIN HFQ"/>
    <property type="match status" value="1"/>
</dbReference>
<dbReference type="Pfam" id="PF17209">
    <property type="entry name" value="Hfq"/>
    <property type="match status" value="1"/>
</dbReference>
<dbReference type="SUPFAM" id="SSF50182">
    <property type="entry name" value="Sm-like ribonucleoproteins"/>
    <property type="match status" value="1"/>
</dbReference>
<dbReference type="PROSITE" id="PS52002">
    <property type="entry name" value="SM"/>
    <property type="match status" value="1"/>
</dbReference>
<protein>
    <recommendedName>
        <fullName evidence="1">RNA-binding protein Hfq</fullName>
    </recommendedName>
</protein>
<accession>A5I2R9</accession>
<accession>A7G480</accession>
<keyword id="KW-1185">Reference proteome</keyword>
<keyword id="KW-0694">RNA-binding</keyword>
<keyword id="KW-0346">Stress response</keyword>
<organism>
    <name type="scientific">Clostridium botulinum (strain Hall / ATCC 3502 / NCTC 13319 / Type A)</name>
    <dbReference type="NCBI Taxonomy" id="441771"/>
    <lineage>
        <taxon>Bacteria</taxon>
        <taxon>Bacillati</taxon>
        <taxon>Bacillota</taxon>
        <taxon>Clostridia</taxon>
        <taxon>Eubacteriales</taxon>
        <taxon>Clostridiaceae</taxon>
        <taxon>Clostridium</taxon>
    </lineage>
</organism>
<sequence>MTKVVNNLQDIFLNGARKNRIPVTIYLTNGFQLKGFVKGFDNFTVILDSDGKQMMIYKHAISTINPAKPLLFVQNPNGDDYKDKE</sequence>
<comment type="function">
    <text evidence="1">RNA chaperone that binds small regulatory RNA (sRNAs) and mRNAs to facilitate mRNA translational regulation in response to envelope stress, environmental stress and changes in metabolite concentrations. Also binds with high specificity to tRNAs.</text>
</comment>
<comment type="subunit">
    <text evidence="1">Homohexamer.</text>
</comment>
<comment type="similarity">
    <text evidence="1">Belongs to the Hfq family.</text>
</comment>
<evidence type="ECO:0000255" key="1">
    <source>
        <dbReference type="HAMAP-Rule" id="MF_00436"/>
    </source>
</evidence>
<evidence type="ECO:0000255" key="2">
    <source>
        <dbReference type="PROSITE-ProRule" id="PRU01346"/>
    </source>
</evidence>
<feature type="chain" id="PRO_1000025903" description="RNA-binding protein Hfq">
    <location>
        <begin position="1"/>
        <end position="85"/>
    </location>
</feature>
<feature type="domain" description="Sm" evidence="2">
    <location>
        <begin position="10"/>
        <end position="70"/>
    </location>
</feature>
<proteinExistence type="inferred from homology"/>
<gene>
    <name evidence="1" type="primary">hfq</name>
    <name type="ordered locus">CBO1797</name>
    <name type="ordered locus">CLC_1739</name>
</gene>
<reference key="1">
    <citation type="journal article" date="2007" name="Genome Res.">
        <title>Genome sequence of a proteolytic (Group I) Clostridium botulinum strain Hall A and comparative analysis of the clostridial genomes.</title>
        <authorList>
            <person name="Sebaihia M."/>
            <person name="Peck M.W."/>
            <person name="Minton N.P."/>
            <person name="Thomson N.R."/>
            <person name="Holden M.T.G."/>
            <person name="Mitchell W.J."/>
            <person name="Carter A.T."/>
            <person name="Bentley S.D."/>
            <person name="Mason D.R."/>
            <person name="Crossman L."/>
            <person name="Paul C.J."/>
            <person name="Ivens A."/>
            <person name="Wells-Bennik M.H.J."/>
            <person name="Davis I.J."/>
            <person name="Cerdeno-Tarraga A.M."/>
            <person name="Churcher C."/>
            <person name="Quail M.A."/>
            <person name="Chillingworth T."/>
            <person name="Feltwell T."/>
            <person name="Fraser A."/>
            <person name="Goodhead I."/>
            <person name="Hance Z."/>
            <person name="Jagels K."/>
            <person name="Larke N."/>
            <person name="Maddison M."/>
            <person name="Moule S."/>
            <person name="Mungall K."/>
            <person name="Norbertczak H."/>
            <person name="Rabbinowitsch E."/>
            <person name="Sanders M."/>
            <person name="Simmonds M."/>
            <person name="White B."/>
            <person name="Whithead S."/>
            <person name="Parkhill J."/>
        </authorList>
    </citation>
    <scope>NUCLEOTIDE SEQUENCE [LARGE SCALE GENOMIC DNA]</scope>
    <source>
        <strain>Hall / ATCC 3502 / NCTC 13319 / Type A</strain>
    </source>
</reference>
<reference key="2">
    <citation type="journal article" date="2007" name="PLoS ONE">
        <title>Analysis of the neurotoxin complex genes in Clostridium botulinum A1-A4 and B1 strains: BoNT/A3, /Ba4 and /B1 clusters are located within plasmids.</title>
        <authorList>
            <person name="Smith T.J."/>
            <person name="Hill K.K."/>
            <person name="Foley B.T."/>
            <person name="Detter J.C."/>
            <person name="Munk A.C."/>
            <person name="Bruce D.C."/>
            <person name="Doggett N.A."/>
            <person name="Smith L.A."/>
            <person name="Marks J.D."/>
            <person name="Xie G."/>
            <person name="Brettin T.S."/>
        </authorList>
    </citation>
    <scope>NUCLEOTIDE SEQUENCE [LARGE SCALE GENOMIC DNA]</scope>
    <source>
        <strain>Hall / ATCC 3502 / NCTC 13319 / Type A</strain>
    </source>
</reference>